<evidence type="ECO:0000255" key="1">
    <source>
        <dbReference type="HAMAP-Rule" id="MF_01309"/>
    </source>
</evidence>
<evidence type="ECO:0000305" key="2"/>
<sequence length="213" mass="24504">MGQKVHPYGFRLGYTKNWLSRWFSSKDYPAFVYEDDSIRKYVKEKIFHAGVSKIEIERAGGKIRLIIHTARPGIIIGRKGVEIEKLREDLRRKFNKEFALEVSEIRRPETDAQLVAENIAQQLERRVAFRRAMKRIVGLARKFGAEGIKVACAGRLAGAEIARTEWYRDGRVPLQTLRADIDYGVARANTTYGVIGIKVWIFKGEILDHEVEQ</sequence>
<feature type="chain" id="PRO_1000214333" description="Small ribosomal subunit protein uS3">
    <location>
        <begin position="1"/>
        <end position="213"/>
    </location>
</feature>
<feature type="domain" description="KH type-2" evidence="1">
    <location>
        <begin position="38"/>
        <end position="106"/>
    </location>
</feature>
<comment type="function">
    <text evidence="1">Binds the lower part of the 30S subunit head. Binds mRNA in the 70S ribosome, positioning it for translation.</text>
</comment>
<comment type="subunit">
    <text evidence="1">Part of the 30S ribosomal subunit. Forms a tight complex with proteins S10 and S14.</text>
</comment>
<comment type="similarity">
    <text evidence="1">Belongs to the universal ribosomal protein uS3 family.</text>
</comment>
<dbReference type="EMBL" id="CP001649">
    <property type="protein sequence ID" value="ACS79254.1"/>
    <property type="molecule type" value="Genomic_DNA"/>
</dbReference>
<dbReference type="RefSeq" id="WP_015851073.1">
    <property type="nucleotide sequence ID" value="NC_012881.1"/>
</dbReference>
<dbReference type="SMR" id="C6C191"/>
<dbReference type="STRING" id="526222.Desal_1191"/>
<dbReference type="KEGG" id="dsa:Desal_1191"/>
<dbReference type="eggNOG" id="COG0092">
    <property type="taxonomic scope" value="Bacteria"/>
</dbReference>
<dbReference type="HOGENOM" id="CLU_058591_0_2_7"/>
<dbReference type="OrthoDB" id="9806396at2"/>
<dbReference type="Proteomes" id="UP000002601">
    <property type="component" value="Chromosome"/>
</dbReference>
<dbReference type="GO" id="GO:0022627">
    <property type="term" value="C:cytosolic small ribosomal subunit"/>
    <property type="evidence" value="ECO:0007669"/>
    <property type="project" value="TreeGrafter"/>
</dbReference>
<dbReference type="GO" id="GO:0003729">
    <property type="term" value="F:mRNA binding"/>
    <property type="evidence" value="ECO:0007669"/>
    <property type="project" value="UniProtKB-UniRule"/>
</dbReference>
<dbReference type="GO" id="GO:0019843">
    <property type="term" value="F:rRNA binding"/>
    <property type="evidence" value="ECO:0007669"/>
    <property type="project" value="UniProtKB-UniRule"/>
</dbReference>
<dbReference type="GO" id="GO:0003735">
    <property type="term" value="F:structural constituent of ribosome"/>
    <property type="evidence" value="ECO:0007669"/>
    <property type="project" value="InterPro"/>
</dbReference>
<dbReference type="GO" id="GO:0006412">
    <property type="term" value="P:translation"/>
    <property type="evidence" value="ECO:0007669"/>
    <property type="project" value="UniProtKB-UniRule"/>
</dbReference>
<dbReference type="CDD" id="cd02412">
    <property type="entry name" value="KH-II_30S_S3"/>
    <property type="match status" value="1"/>
</dbReference>
<dbReference type="FunFam" id="3.30.300.20:FF:000001">
    <property type="entry name" value="30S ribosomal protein S3"/>
    <property type="match status" value="1"/>
</dbReference>
<dbReference type="Gene3D" id="3.30.300.20">
    <property type="match status" value="1"/>
</dbReference>
<dbReference type="Gene3D" id="3.30.1140.32">
    <property type="entry name" value="Ribosomal protein S3, C-terminal domain"/>
    <property type="match status" value="1"/>
</dbReference>
<dbReference type="HAMAP" id="MF_01309_B">
    <property type="entry name" value="Ribosomal_uS3_B"/>
    <property type="match status" value="1"/>
</dbReference>
<dbReference type="InterPro" id="IPR004087">
    <property type="entry name" value="KH_dom"/>
</dbReference>
<dbReference type="InterPro" id="IPR015946">
    <property type="entry name" value="KH_dom-like_a/b"/>
</dbReference>
<dbReference type="InterPro" id="IPR004044">
    <property type="entry name" value="KH_dom_type_2"/>
</dbReference>
<dbReference type="InterPro" id="IPR009019">
    <property type="entry name" value="KH_sf_prok-type"/>
</dbReference>
<dbReference type="InterPro" id="IPR036419">
    <property type="entry name" value="Ribosomal_S3_C_sf"/>
</dbReference>
<dbReference type="InterPro" id="IPR005704">
    <property type="entry name" value="Ribosomal_uS3_bac-typ"/>
</dbReference>
<dbReference type="InterPro" id="IPR001351">
    <property type="entry name" value="Ribosomal_uS3_C"/>
</dbReference>
<dbReference type="InterPro" id="IPR018280">
    <property type="entry name" value="Ribosomal_uS3_CS"/>
</dbReference>
<dbReference type="NCBIfam" id="TIGR01009">
    <property type="entry name" value="rpsC_bact"/>
    <property type="match status" value="1"/>
</dbReference>
<dbReference type="PANTHER" id="PTHR11760">
    <property type="entry name" value="30S/40S RIBOSOMAL PROTEIN S3"/>
    <property type="match status" value="1"/>
</dbReference>
<dbReference type="PANTHER" id="PTHR11760:SF19">
    <property type="entry name" value="SMALL RIBOSOMAL SUBUNIT PROTEIN US3C"/>
    <property type="match status" value="1"/>
</dbReference>
<dbReference type="Pfam" id="PF07650">
    <property type="entry name" value="KH_2"/>
    <property type="match status" value="1"/>
</dbReference>
<dbReference type="Pfam" id="PF00189">
    <property type="entry name" value="Ribosomal_S3_C"/>
    <property type="match status" value="1"/>
</dbReference>
<dbReference type="SMART" id="SM00322">
    <property type="entry name" value="KH"/>
    <property type="match status" value="1"/>
</dbReference>
<dbReference type="SUPFAM" id="SSF54814">
    <property type="entry name" value="Prokaryotic type KH domain (KH-domain type II)"/>
    <property type="match status" value="1"/>
</dbReference>
<dbReference type="SUPFAM" id="SSF54821">
    <property type="entry name" value="Ribosomal protein S3 C-terminal domain"/>
    <property type="match status" value="1"/>
</dbReference>
<dbReference type="PROSITE" id="PS50823">
    <property type="entry name" value="KH_TYPE_2"/>
    <property type="match status" value="1"/>
</dbReference>
<dbReference type="PROSITE" id="PS00548">
    <property type="entry name" value="RIBOSOMAL_S3"/>
    <property type="match status" value="1"/>
</dbReference>
<protein>
    <recommendedName>
        <fullName evidence="1">Small ribosomal subunit protein uS3</fullName>
    </recommendedName>
    <alternativeName>
        <fullName evidence="2">30S ribosomal protein S3</fullName>
    </alternativeName>
</protein>
<name>RS3_MARSD</name>
<accession>C6C191</accession>
<organism>
    <name type="scientific">Maridesulfovibrio salexigens (strain ATCC 14822 / DSM 2638 / NCIMB 8403 / VKM B-1763)</name>
    <name type="common">Desulfovibrio salexigens</name>
    <dbReference type="NCBI Taxonomy" id="526222"/>
    <lineage>
        <taxon>Bacteria</taxon>
        <taxon>Pseudomonadati</taxon>
        <taxon>Thermodesulfobacteriota</taxon>
        <taxon>Desulfovibrionia</taxon>
        <taxon>Desulfovibrionales</taxon>
        <taxon>Desulfovibrionaceae</taxon>
        <taxon>Maridesulfovibrio</taxon>
    </lineage>
</organism>
<proteinExistence type="inferred from homology"/>
<gene>
    <name evidence="1" type="primary">rpsC</name>
    <name type="ordered locus">Desal_1191</name>
</gene>
<reference key="1">
    <citation type="submission" date="2009-06" db="EMBL/GenBank/DDBJ databases">
        <title>Complete sequence of Desulfovibrio salexigens DSM 2638.</title>
        <authorList>
            <consortium name="US DOE Joint Genome Institute"/>
            <person name="Lucas S."/>
            <person name="Copeland A."/>
            <person name="Lapidus A."/>
            <person name="Glavina del Rio T."/>
            <person name="Tice H."/>
            <person name="Bruce D."/>
            <person name="Goodwin L."/>
            <person name="Pitluck S."/>
            <person name="Munk A.C."/>
            <person name="Brettin T."/>
            <person name="Detter J.C."/>
            <person name="Han C."/>
            <person name="Tapia R."/>
            <person name="Larimer F."/>
            <person name="Land M."/>
            <person name="Hauser L."/>
            <person name="Kyrpides N."/>
            <person name="Anderson I."/>
            <person name="Wall J.D."/>
            <person name="Arkin A.P."/>
            <person name="Dehal P."/>
            <person name="Chivian D."/>
            <person name="Giles B."/>
            <person name="Hazen T.C."/>
        </authorList>
    </citation>
    <scope>NUCLEOTIDE SEQUENCE [LARGE SCALE GENOMIC DNA]</scope>
    <source>
        <strain>ATCC 14822 / DSM 2638 / NCIMB 8403 / VKM B-1763</strain>
    </source>
</reference>
<keyword id="KW-1185">Reference proteome</keyword>
<keyword id="KW-0687">Ribonucleoprotein</keyword>
<keyword id="KW-0689">Ribosomal protein</keyword>
<keyword id="KW-0694">RNA-binding</keyword>
<keyword id="KW-0699">rRNA-binding</keyword>